<name>TRPD_ANADF</name>
<reference key="1">
    <citation type="journal article" date="2015" name="Genome Announc.">
        <title>Complete genome sequence of Anaeromyxobacter sp. Fw109-5, an anaerobic, metal-reducing bacterium isolated from a contaminated subsurface environment.</title>
        <authorList>
            <person name="Hwang C."/>
            <person name="Copeland A."/>
            <person name="Lucas S."/>
            <person name="Lapidus A."/>
            <person name="Barry K."/>
            <person name="Glavina Del Rio T."/>
            <person name="Dalin E."/>
            <person name="Tice H."/>
            <person name="Pitluck S."/>
            <person name="Sims D."/>
            <person name="Brettin T."/>
            <person name="Bruce D.C."/>
            <person name="Detter J.C."/>
            <person name="Han C.S."/>
            <person name="Schmutz J."/>
            <person name="Larimer F.W."/>
            <person name="Land M.L."/>
            <person name="Hauser L.J."/>
            <person name="Kyrpides N."/>
            <person name="Lykidis A."/>
            <person name="Richardson P."/>
            <person name="Belieav A."/>
            <person name="Sanford R.A."/>
            <person name="Loeffler F.E."/>
            <person name="Fields M.W."/>
        </authorList>
    </citation>
    <scope>NUCLEOTIDE SEQUENCE [LARGE SCALE GENOMIC DNA]</scope>
    <source>
        <strain>Fw109-5</strain>
    </source>
</reference>
<accession>A7H793</accession>
<protein>
    <recommendedName>
        <fullName evidence="1">Anthranilate phosphoribosyltransferase</fullName>
        <ecNumber evidence="1">2.4.2.18</ecNumber>
    </recommendedName>
</protein>
<keyword id="KW-0028">Amino-acid biosynthesis</keyword>
<keyword id="KW-0057">Aromatic amino acid biosynthesis</keyword>
<keyword id="KW-0328">Glycosyltransferase</keyword>
<keyword id="KW-0460">Magnesium</keyword>
<keyword id="KW-0479">Metal-binding</keyword>
<keyword id="KW-1185">Reference proteome</keyword>
<keyword id="KW-0808">Transferase</keyword>
<keyword id="KW-0822">Tryptophan biosynthesis</keyword>
<proteinExistence type="inferred from homology"/>
<dbReference type="EC" id="2.4.2.18" evidence="1"/>
<dbReference type="EMBL" id="CP000769">
    <property type="protein sequence ID" value="ABS24589.1"/>
    <property type="molecule type" value="Genomic_DNA"/>
</dbReference>
<dbReference type="RefSeq" id="WP_011984695.1">
    <property type="nucleotide sequence ID" value="NC_009675.1"/>
</dbReference>
<dbReference type="SMR" id="A7H793"/>
<dbReference type="STRING" id="404589.Anae109_0374"/>
<dbReference type="KEGG" id="afw:Anae109_0374"/>
<dbReference type="eggNOG" id="COG0547">
    <property type="taxonomic scope" value="Bacteria"/>
</dbReference>
<dbReference type="HOGENOM" id="CLU_034315_2_1_7"/>
<dbReference type="OrthoDB" id="9806430at2"/>
<dbReference type="UniPathway" id="UPA00035">
    <property type="reaction ID" value="UER00041"/>
</dbReference>
<dbReference type="Proteomes" id="UP000006382">
    <property type="component" value="Chromosome"/>
</dbReference>
<dbReference type="GO" id="GO:0005829">
    <property type="term" value="C:cytosol"/>
    <property type="evidence" value="ECO:0007669"/>
    <property type="project" value="TreeGrafter"/>
</dbReference>
<dbReference type="GO" id="GO:0004048">
    <property type="term" value="F:anthranilate phosphoribosyltransferase activity"/>
    <property type="evidence" value="ECO:0007669"/>
    <property type="project" value="UniProtKB-UniRule"/>
</dbReference>
<dbReference type="GO" id="GO:0000287">
    <property type="term" value="F:magnesium ion binding"/>
    <property type="evidence" value="ECO:0007669"/>
    <property type="project" value="UniProtKB-UniRule"/>
</dbReference>
<dbReference type="GO" id="GO:0000162">
    <property type="term" value="P:L-tryptophan biosynthetic process"/>
    <property type="evidence" value="ECO:0007669"/>
    <property type="project" value="UniProtKB-UniRule"/>
</dbReference>
<dbReference type="FunFam" id="3.40.1030.10:FF:000002">
    <property type="entry name" value="Anthranilate phosphoribosyltransferase"/>
    <property type="match status" value="1"/>
</dbReference>
<dbReference type="Gene3D" id="3.40.1030.10">
    <property type="entry name" value="Nucleoside phosphorylase/phosphoribosyltransferase catalytic domain"/>
    <property type="match status" value="1"/>
</dbReference>
<dbReference type="Gene3D" id="1.20.970.10">
    <property type="entry name" value="Transferase, Pyrimidine Nucleoside Phosphorylase, Chain C"/>
    <property type="match status" value="1"/>
</dbReference>
<dbReference type="HAMAP" id="MF_00211">
    <property type="entry name" value="TrpD"/>
    <property type="match status" value="1"/>
</dbReference>
<dbReference type="InterPro" id="IPR005940">
    <property type="entry name" value="Anthranilate_Pribosyl_Tfrase"/>
</dbReference>
<dbReference type="InterPro" id="IPR000312">
    <property type="entry name" value="Glycosyl_Trfase_fam3"/>
</dbReference>
<dbReference type="InterPro" id="IPR017459">
    <property type="entry name" value="Glycosyl_Trfase_fam3_N_dom"/>
</dbReference>
<dbReference type="InterPro" id="IPR036320">
    <property type="entry name" value="Glycosyl_Trfase_fam3_N_dom_sf"/>
</dbReference>
<dbReference type="InterPro" id="IPR035902">
    <property type="entry name" value="Nuc_phospho_transferase"/>
</dbReference>
<dbReference type="NCBIfam" id="TIGR01245">
    <property type="entry name" value="trpD"/>
    <property type="match status" value="1"/>
</dbReference>
<dbReference type="PANTHER" id="PTHR43285">
    <property type="entry name" value="ANTHRANILATE PHOSPHORIBOSYLTRANSFERASE"/>
    <property type="match status" value="1"/>
</dbReference>
<dbReference type="PANTHER" id="PTHR43285:SF2">
    <property type="entry name" value="ANTHRANILATE PHOSPHORIBOSYLTRANSFERASE"/>
    <property type="match status" value="1"/>
</dbReference>
<dbReference type="Pfam" id="PF02885">
    <property type="entry name" value="Glycos_trans_3N"/>
    <property type="match status" value="1"/>
</dbReference>
<dbReference type="Pfam" id="PF00591">
    <property type="entry name" value="Glycos_transf_3"/>
    <property type="match status" value="1"/>
</dbReference>
<dbReference type="SUPFAM" id="SSF52418">
    <property type="entry name" value="Nucleoside phosphorylase/phosphoribosyltransferase catalytic domain"/>
    <property type="match status" value="1"/>
</dbReference>
<dbReference type="SUPFAM" id="SSF47648">
    <property type="entry name" value="Nucleoside phosphorylase/phosphoribosyltransferase N-terminal domain"/>
    <property type="match status" value="1"/>
</dbReference>
<gene>
    <name evidence="1" type="primary">trpD</name>
    <name type="ordered locus">Anae109_0374</name>
</gene>
<feature type="chain" id="PRO_1000042988" description="Anthranilate phosphoribosyltransferase">
    <location>
        <begin position="1"/>
        <end position="337"/>
    </location>
</feature>
<feature type="binding site" evidence="1">
    <location>
        <position position="80"/>
    </location>
    <ligand>
        <name>5-phospho-alpha-D-ribose 1-diphosphate</name>
        <dbReference type="ChEBI" id="CHEBI:58017"/>
    </ligand>
</feature>
<feature type="binding site" evidence="1">
    <location>
        <position position="80"/>
    </location>
    <ligand>
        <name>anthranilate</name>
        <dbReference type="ChEBI" id="CHEBI:16567"/>
        <label>1</label>
    </ligand>
</feature>
<feature type="binding site" evidence="1">
    <location>
        <begin position="83"/>
        <end position="84"/>
    </location>
    <ligand>
        <name>5-phospho-alpha-D-ribose 1-diphosphate</name>
        <dbReference type="ChEBI" id="CHEBI:58017"/>
    </ligand>
</feature>
<feature type="binding site" evidence="1">
    <location>
        <position position="88"/>
    </location>
    <ligand>
        <name>5-phospho-alpha-D-ribose 1-diphosphate</name>
        <dbReference type="ChEBI" id="CHEBI:58017"/>
    </ligand>
</feature>
<feature type="binding site" evidence="1">
    <location>
        <begin position="90"/>
        <end position="93"/>
    </location>
    <ligand>
        <name>5-phospho-alpha-D-ribose 1-diphosphate</name>
        <dbReference type="ChEBI" id="CHEBI:58017"/>
    </ligand>
</feature>
<feature type="binding site" evidence="1">
    <location>
        <position position="92"/>
    </location>
    <ligand>
        <name>Mg(2+)</name>
        <dbReference type="ChEBI" id="CHEBI:18420"/>
        <label>1</label>
    </ligand>
</feature>
<feature type="binding site" evidence="1">
    <location>
        <begin position="108"/>
        <end position="116"/>
    </location>
    <ligand>
        <name>5-phospho-alpha-D-ribose 1-diphosphate</name>
        <dbReference type="ChEBI" id="CHEBI:58017"/>
    </ligand>
</feature>
<feature type="binding site" evidence="1">
    <location>
        <position position="111"/>
    </location>
    <ligand>
        <name>anthranilate</name>
        <dbReference type="ChEBI" id="CHEBI:16567"/>
        <label>1</label>
    </ligand>
</feature>
<feature type="binding site" evidence="1">
    <location>
        <position position="120"/>
    </location>
    <ligand>
        <name>5-phospho-alpha-D-ribose 1-diphosphate</name>
        <dbReference type="ChEBI" id="CHEBI:58017"/>
    </ligand>
</feature>
<feature type="binding site" evidence="1">
    <location>
        <position position="166"/>
    </location>
    <ligand>
        <name>anthranilate</name>
        <dbReference type="ChEBI" id="CHEBI:16567"/>
        <label>2</label>
    </ligand>
</feature>
<feature type="binding site" evidence="1">
    <location>
        <position position="224"/>
    </location>
    <ligand>
        <name>Mg(2+)</name>
        <dbReference type="ChEBI" id="CHEBI:18420"/>
        <label>2</label>
    </ligand>
</feature>
<feature type="binding site" evidence="1">
    <location>
        <position position="225"/>
    </location>
    <ligand>
        <name>Mg(2+)</name>
        <dbReference type="ChEBI" id="CHEBI:18420"/>
        <label>1</label>
    </ligand>
</feature>
<feature type="binding site" evidence="1">
    <location>
        <position position="225"/>
    </location>
    <ligand>
        <name>Mg(2+)</name>
        <dbReference type="ChEBI" id="CHEBI:18420"/>
        <label>2</label>
    </ligand>
</feature>
<evidence type="ECO:0000255" key="1">
    <source>
        <dbReference type="HAMAP-Rule" id="MF_00211"/>
    </source>
</evidence>
<comment type="function">
    <text evidence="1">Catalyzes the transfer of the phosphoribosyl group of 5-phosphorylribose-1-pyrophosphate (PRPP) to anthranilate to yield N-(5'-phosphoribosyl)-anthranilate (PRA).</text>
</comment>
<comment type="catalytic activity">
    <reaction evidence="1">
        <text>N-(5-phospho-beta-D-ribosyl)anthranilate + diphosphate = 5-phospho-alpha-D-ribose 1-diphosphate + anthranilate</text>
        <dbReference type="Rhea" id="RHEA:11768"/>
        <dbReference type="ChEBI" id="CHEBI:16567"/>
        <dbReference type="ChEBI" id="CHEBI:18277"/>
        <dbReference type="ChEBI" id="CHEBI:33019"/>
        <dbReference type="ChEBI" id="CHEBI:58017"/>
        <dbReference type="EC" id="2.4.2.18"/>
    </reaction>
</comment>
<comment type="cofactor">
    <cofactor evidence="1">
        <name>Mg(2+)</name>
        <dbReference type="ChEBI" id="CHEBI:18420"/>
    </cofactor>
    <text evidence="1">Binds 2 magnesium ions per monomer.</text>
</comment>
<comment type="pathway">
    <text evidence="1">Amino-acid biosynthesis; L-tryptophan biosynthesis; L-tryptophan from chorismate: step 2/5.</text>
</comment>
<comment type="subunit">
    <text evidence="1">Homodimer.</text>
</comment>
<comment type="similarity">
    <text evidence="1">Belongs to the anthranilate phosphoribosyltransferase family.</text>
</comment>
<organism>
    <name type="scientific">Anaeromyxobacter sp. (strain Fw109-5)</name>
    <dbReference type="NCBI Taxonomy" id="404589"/>
    <lineage>
        <taxon>Bacteria</taxon>
        <taxon>Pseudomonadati</taxon>
        <taxon>Myxococcota</taxon>
        <taxon>Myxococcia</taxon>
        <taxon>Myxococcales</taxon>
        <taxon>Cystobacterineae</taxon>
        <taxon>Anaeromyxobacteraceae</taxon>
        <taxon>Anaeromyxobacter</taxon>
    </lineage>
</organism>
<sequence length="337" mass="34767">MIQQALTRLLDRHDLARAEMSAVMDEIADGGATPAQVGAFLAALRLKGETVEEIAGAAEVMRARVDPIRVDRDVFVDTCGTGGDGRHTFNISTTAAFIVAGAGVTVAKHGNRAVSSRSGSADVLAALGVDVDAAKDVVERAIEEVGIGFLFAPRLHPAFKAVAGIRRELGVRTVFNLLGPLANPAGARYQVLGVYEPRWVPILGGVLAALGAAHAFVVHGEGLDEIAVTGMTHVCEVRAGECERYAMVPEDLGLRRHEEAEIAGGDADRNARILADVLAGQQGGPRDAALANAAAALVAAGAAADLREGVRLGAEAVDRGAASDKLARLVAVTRGGA</sequence>